<protein>
    <recommendedName>
        <fullName>Sulfate adenylyltransferase subunit 1</fullName>
        <ecNumber evidence="3 4">2.7.7.4</ecNumber>
    </recommendedName>
    <alternativeName>
        <fullName>ATP-sulfurylase large subunit</fullName>
    </alternativeName>
    <alternativeName>
        <fullName>Sulfate adenylate transferase</fullName>
        <shortName>SAT</shortName>
    </alternativeName>
</protein>
<accession>P23845</accession>
<accession>Q2MA78</accession>
<proteinExistence type="evidence at protein level"/>
<keyword id="KW-0067">ATP-binding</keyword>
<keyword id="KW-0903">Direct protein sequencing</keyword>
<keyword id="KW-0342">GTP-binding</keyword>
<keyword id="KW-0547">Nucleotide-binding</keyword>
<keyword id="KW-0548">Nucleotidyltransferase</keyword>
<keyword id="KW-1185">Reference proteome</keyword>
<keyword id="KW-0808">Transferase</keyword>
<reference key="1">
    <citation type="journal article" date="1992" name="J. Biol. Chem.">
        <title>The DNA sequence of the sulfate activation locus from Escherichia coli K-12.</title>
        <authorList>
            <person name="Leyh T.S."/>
            <person name="Vogt T.F."/>
            <person name="Suo Y."/>
        </authorList>
    </citation>
    <scope>NUCLEOTIDE SEQUENCE [GENOMIC DNA]</scope>
    <scope>PROTEIN SEQUENCE OF 1-5</scope>
    <source>
        <strain>K12</strain>
    </source>
</reference>
<reference key="2">
    <citation type="journal article" date="1997" name="Science">
        <title>The complete genome sequence of Escherichia coli K-12.</title>
        <authorList>
            <person name="Blattner F.R."/>
            <person name="Plunkett G. III"/>
            <person name="Bloch C.A."/>
            <person name="Perna N.T."/>
            <person name="Burland V."/>
            <person name="Riley M."/>
            <person name="Collado-Vides J."/>
            <person name="Glasner J.D."/>
            <person name="Rode C.K."/>
            <person name="Mayhew G.F."/>
            <person name="Gregor J."/>
            <person name="Davis N.W."/>
            <person name="Kirkpatrick H.A."/>
            <person name="Goeden M.A."/>
            <person name="Rose D.J."/>
            <person name="Mau B."/>
            <person name="Shao Y."/>
        </authorList>
    </citation>
    <scope>NUCLEOTIDE SEQUENCE [LARGE SCALE GENOMIC DNA]</scope>
    <source>
        <strain>K12 / MG1655 / ATCC 47076</strain>
    </source>
</reference>
<reference key="3">
    <citation type="journal article" date="2006" name="Mol. Syst. Biol.">
        <title>Highly accurate genome sequences of Escherichia coli K-12 strains MG1655 and W3110.</title>
        <authorList>
            <person name="Hayashi K."/>
            <person name="Morooka N."/>
            <person name="Yamamoto Y."/>
            <person name="Fujita K."/>
            <person name="Isono K."/>
            <person name="Choi S."/>
            <person name="Ohtsubo E."/>
            <person name="Baba T."/>
            <person name="Wanner B.L."/>
            <person name="Mori H."/>
            <person name="Horiuchi T."/>
        </authorList>
    </citation>
    <scope>NUCLEOTIDE SEQUENCE [LARGE SCALE GENOMIC DNA]</scope>
    <source>
        <strain>K12 / W3110 / ATCC 27325 / DSM 5911</strain>
    </source>
</reference>
<reference key="4">
    <citation type="journal article" date="1988" name="J. Biol. Chem.">
        <title>The sulfate activation locus of Escherichia coli K12: cloning, genetic, and enzymatic characterization.</title>
        <authorList>
            <person name="Leyh T.S."/>
            <person name="Taylor J.C."/>
            <person name="Markham G.D."/>
        </authorList>
    </citation>
    <scope>FUNCTION</scope>
    <scope>CATALYTIC ACTIVITY</scope>
    <scope>PATHWAY</scope>
</reference>
<reference key="5">
    <citation type="journal article" date="1994" name="Biochemistry">
        <title>The energetic linkage of GTP hydrolysis and the synthesis of activated sulfate.</title>
        <authorList>
            <person name="Liu C."/>
            <person name="Suo Y."/>
            <person name="Leyh T.S."/>
        </authorList>
    </citation>
    <scope>FUNCTION</scope>
    <scope>CATALYTIC ACTIVITY</scope>
    <scope>ACTIVITY REGULATION</scope>
    <scope>PATHWAY</scope>
</reference>
<reference key="6">
    <citation type="journal article" date="1997" name="Electrophoresis">
        <title>Escherichia coli proteome analysis using the gene-protein database.</title>
        <authorList>
            <person name="VanBogelen R.A."/>
            <person name="Abshire K.Z."/>
            <person name="Moldover B."/>
            <person name="Olson E.R."/>
            <person name="Neidhardt F.C."/>
        </authorList>
    </citation>
    <scope>IDENTIFICATION BY 2D-GEL</scope>
</reference>
<dbReference type="EC" id="2.7.7.4" evidence="3 4"/>
<dbReference type="EMBL" id="M74586">
    <property type="protein sequence ID" value="AAA23646.1"/>
    <property type="molecule type" value="Genomic_DNA"/>
</dbReference>
<dbReference type="EMBL" id="U29579">
    <property type="protein sequence ID" value="AAA69261.1"/>
    <property type="molecule type" value="Genomic_DNA"/>
</dbReference>
<dbReference type="EMBL" id="U00096">
    <property type="protein sequence ID" value="AAC75793.1"/>
    <property type="molecule type" value="Genomic_DNA"/>
</dbReference>
<dbReference type="EMBL" id="AP009048">
    <property type="protein sequence ID" value="BAE76828.1"/>
    <property type="molecule type" value="Genomic_DNA"/>
</dbReference>
<dbReference type="PIR" id="JN0327">
    <property type="entry name" value="JN0327"/>
</dbReference>
<dbReference type="RefSeq" id="NP_417231.1">
    <property type="nucleotide sequence ID" value="NC_000913.3"/>
</dbReference>
<dbReference type="RefSeq" id="WP_001090361.1">
    <property type="nucleotide sequence ID" value="NZ_SSZK01000017.1"/>
</dbReference>
<dbReference type="SMR" id="P23845"/>
<dbReference type="BioGRID" id="4262932">
    <property type="interactions" value="29"/>
</dbReference>
<dbReference type="BioGRID" id="851551">
    <property type="interactions" value="1"/>
</dbReference>
<dbReference type="ComplexPortal" id="CPX-4471">
    <property type="entry name" value="Sulfate adenylyltransferase complex"/>
</dbReference>
<dbReference type="DIP" id="DIP-513N"/>
<dbReference type="FunCoup" id="P23845">
    <property type="interactions" value="557"/>
</dbReference>
<dbReference type="IntAct" id="P23845">
    <property type="interactions" value="3"/>
</dbReference>
<dbReference type="STRING" id="511145.b2751"/>
<dbReference type="jPOST" id="P23845"/>
<dbReference type="PaxDb" id="511145-b2751"/>
<dbReference type="EnsemblBacteria" id="AAC75793">
    <property type="protein sequence ID" value="AAC75793"/>
    <property type="gene ID" value="b2751"/>
</dbReference>
<dbReference type="GeneID" id="93779255"/>
<dbReference type="GeneID" id="947219"/>
<dbReference type="KEGG" id="ecj:JW2721"/>
<dbReference type="KEGG" id="eco:b2751"/>
<dbReference type="KEGG" id="ecoc:C3026_15125"/>
<dbReference type="PATRIC" id="fig|1411691.4.peg.3989"/>
<dbReference type="EchoBASE" id="EB0191"/>
<dbReference type="eggNOG" id="COG2895">
    <property type="taxonomic scope" value="Bacteria"/>
</dbReference>
<dbReference type="HOGENOM" id="CLU_007265_5_2_6"/>
<dbReference type="InParanoid" id="P23845"/>
<dbReference type="OMA" id="MDLIGWD"/>
<dbReference type="OrthoDB" id="9804504at2"/>
<dbReference type="PhylomeDB" id="P23845"/>
<dbReference type="BioCyc" id="EcoCyc:CYSN-MONOMER"/>
<dbReference type="BioCyc" id="MetaCyc:CYSN-MONOMER"/>
<dbReference type="SABIO-RK" id="P23845"/>
<dbReference type="UniPathway" id="UPA00140">
    <property type="reaction ID" value="UER00204"/>
</dbReference>
<dbReference type="PRO" id="PR:P23845"/>
<dbReference type="Proteomes" id="UP000000625">
    <property type="component" value="Chromosome"/>
</dbReference>
<dbReference type="GO" id="GO:0009336">
    <property type="term" value="C:sulfate adenylyltransferase complex (ATP)"/>
    <property type="evidence" value="ECO:0000353"/>
    <property type="project" value="ComplexPortal"/>
</dbReference>
<dbReference type="GO" id="GO:0005524">
    <property type="term" value="F:ATP binding"/>
    <property type="evidence" value="ECO:0007669"/>
    <property type="project" value="UniProtKB-KW"/>
</dbReference>
<dbReference type="GO" id="GO:0005525">
    <property type="term" value="F:GTP binding"/>
    <property type="evidence" value="ECO:0000250"/>
    <property type="project" value="EcoliWiki"/>
</dbReference>
<dbReference type="GO" id="GO:0003924">
    <property type="term" value="F:GTPase activity"/>
    <property type="evidence" value="ECO:0000314"/>
    <property type="project" value="EcoliWiki"/>
</dbReference>
<dbReference type="GO" id="GO:0004781">
    <property type="term" value="F:sulfate adenylyltransferase (ATP) activity"/>
    <property type="evidence" value="ECO:0000314"/>
    <property type="project" value="EcoCyc"/>
</dbReference>
<dbReference type="GO" id="GO:0070814">
    <property type="term" value="P:hydrogen sulfide biosynthetic process"/>
    <property type="evidence" value="ECO:0007669"/>
    <property type="project" value="UniProtKB-UniRule"/>
</dbReference>
<dbReference type="GO" id="GO:0000103">
    <property type="term" value="P:sulfate assimilation"/>
    <property type="evidence" value="ECO:0000314"/>
    <property type="project" value="ComplexPortal"/>
</dbReference>
<dbReference type="GO" id="GO:0006790">
    <property type="term" value="P:sulfur compound metabolic process"/>
    <property type="evidence" value="ECO:0000315"/>
    <property type="project" value="EcoliWiki"/>
</dbReference>
<dbReference type="CDD" id="cd04166">
    <property type="entry name" value="CysN_ATPS"/>
    <property type="match status" value="1"/>
</dbReference>
<dbReference type="CDD" id="cd03695">
    <property type="entry name" value="CysN_NodQ_II"/>
    <property type="match status" value="1"/>
</dbReference>
<dbReference type="CDD" id="cd04095">
    <property type="entry name" value="CysN_NoDQ_III"/>
    <property type="match status" value="1"/>
</dbReference>
<dbReference type="FunFam" id="2.40.30.10:FF:000027">
    <property type="entry name" value="Sulfate adenylyltransferase subunit 1"/>
    <property type="match status" value="1"/>
</dbReference>
<dbReference type="FunFam" id="2.40.30.10:FF:000031">
    <property type="entry name" value="Sulfate adenylyltransferase subunit 1"/>
    <property type="match status" value="1"/>
</dbReference>
<dbReference type="FunFam" id="3.40.50.300:FF:000119">
    <property type="entry name" value="Sulfate adenylyltransferase subunit 1"/>
    <property type="match status" value="1"/>
</dbReference>
<dbReference type="Gene3D" id="3.40.50.300">
    <property type="entry name" value="P-loop containing nucleotide triphosphate hydrolases"/>
    <property type="match status" value="1"/>
</dbReference>
<dbReference type="Gene3D" id="2.40.30.10">
    <property type="entry name" value="Translation factors"/>
    <property type="match status" value="2"/>
</dbReference>
<dbReference type="HAMAP" id="MF_00062">
    <property type="entry name" value="Sulf_adenylyltr_sub1"/>
    <property type="match status" value="1"/>
</dbReference>
<dbReference type="InterPro" id="IPR041757">
    <property type="entry name" value="CysN_GTP-bd"/>
</dbReference>
<dbReference type="InterPro" id="IPR044138">
    <property type="entry name" value="CysN_II"/>
</dbReference>
<dbReference type="InterPro" id="IPR044139">
    <property type="entry name" value="CysN_NoDQ_III"/>
</dbReference>
<dbReference type="InterPro" id="IPR031157">
    <property type="entry name" value="G_TR_CS"/>
</dbReference>
<dbReference type="InterPro" id="IPR054696">
    <property type="entry name" value="GTP-eEF1A_C"/>
</dbReference>
<dbReference type="InterPro" id="IPR027417">
    <property type="entry name" value="P-loop_NTPase"/>
</dbReference>
<dbReference type="InterPro" id="IPR005225">
    <property type="entry name" value="Small_GTP-bd"/>
</dbReference>
<dbReference type="InterPro" id="IPR011779">
    <property type="entry name" value="SO4_adenylTrfase_lsu"/>
</dbReference>
<dbReference type="InterPro" id="IPR000795">
    <property type="entry name" value="T_Tr_GTP-bd_dom"/>
</dbReference>
<dbReference type="InterPro" id="IPR050100">
    <property type="entry name" value="TRAFAC_GTPase_members"/>
</dbReference>
<dbReference type="InterPro" id="IPR009000">
    <property type="entry name" value="Transl_B-barrel_sf"/>
</dbReference>
<dbReference type="InterPro" id="IPR009001">
    <property type="entry name" value="Transl_elong_EF1A/Init_IF2_C"/>
</dbReference>
<dbReference type="NCBIfam" id="TIGR02034">
    <property type="entry name" value="CysN"/>
    <property type="match status" value="1"/>
</dbReference>
<dbReference type="NCBIfam" id="NF003478">
    <property type="entry name" value="PRK05124.1"/>
    <property type="match status" value="1"/>
</dbReference>
<dbReference type="NCBIfam" id="TIGR00231">
    <property type="entry name" value="small_GTP"/>
    <property type="match status" value="1"/>
</dbReference>
<dbReference type="PANTHER" id="PTHR23115">
    <property type="entry name" value="TRANSLATION FACTOR"/>
    <property type="match status" value="1"/>
</dbReference>
<dbReference type="Pfam" id="PF22594">
    <property type="entry name" value="GTP-eEF1A_C"/>
    <property type="match status" value="1"/>
</dbReference>
<dbReference type="Pfam" id="PF00009">
    <property type="entry name" value="GTP_EFTU"/>
    <property type="match status" value="1"/>
</dbReference>
<dbReference type="PRINTS" id="PR00315">
    <property type="entry name" value="ELONGATNFCT"/>
</dbReference>
<dbReference type="SUPFAM" id="SSF50465">
    <property type="entry name" value="EF-Tu/eEF-1alpha/eIF2-gamma C-terminal domain"/>
    <property type="match status" value="1"/>
</dbReference>
<dbReference type="SUPFAM" id="SSF52540">
    <property type="entry name" value="P-loop containing nucleoside triphosphate hydrolases"/>
    <property type="match status" value="1"/>
</dbReference>
<dbReference type="SUPFAM" id="SSF50447">
    <property type="entry name" value="Translation proteins"/>
    <property type="match status" value="1"/>
</dbReference>
<dbReference type="PROSITE" id="PS00301">
    <property type="entry name" value="G_TR_1"/>
    <property type="match status" value="1"/>
</dbReference>
<dbReference type="PROSITE" id="PS51722">
    <property type="entry name" value="G_TR_2"/>
    <property type="match status" value="1"/>
</dbReference>
<organism>
    <name type="scientific">Escherichia coli (strain K12)</name>
    <dbReference type="NCBI Taxonomy" id="83333"/>
    <lineage>
        <taxon>Bacteria</taxon>
        <taxon>Pseudomonadati</taxon>
        <taxon>Pseudomonadota</taxon>
        <taxon>Gammaproteobacteria</taxon>
        <taxon>Enterobacterales</taxon>
        <taxon>Enterobacteriaceae</taxon>
        <taxon>Escherichia</taxon>
    </lineage>
</organism>
<comment type="function">
    <text evidence="2 3 4">With CysD forms the ATP sulfurylase (ATPS) that catalyzes the adenylation of sulfate producing adenosine 5'-phosphosulfate (APS) and diphosphate, the first enzymatic step in sulfur assimilation pathway. APS synthesis involves the formation of a high-energy phosphoric-sulfuric acid anhydride bond driven by GTP hydrolysis by CysN coupled to ATP hydrolysis by CysD.</text>
</comment>
<comment type="catalytic activity">
    <reaction evidence="2 3 4">
        <text>sulfate + ATP + H(+) = adenosine 5'-phosphosulfate + diphosphate</text>
        <dbReference type="Rhea" id="RHEA:18133"/>
        <dbReference type="ChEBI" id="CHEBI:15378"/>
        <dbReference type="ChEBI" id="CHEBI:16189"/>
        <dbReference type="ChEBI" id="CHEBI:30616"/>
        <dbReference type="ChEBI" id="CHEBI:33019"/>
        <dbReference type="ChEBI" id="CHEBI:58243"/>
        <dbReference type="EC" id="2.7.7.4"/>
    </reaction>
    <physiologicalReaction direction="left-to-right" evidence="3 4">
        <dbReference type="Rhea" id="RHEA:18134"/>
    </physiologicalReaction>
</comment>
<comment type="activity regulation">
    <text evidence="4">GTPase activity is coupled to stimulation of the rate of APS formation.</text>
</comment>
<comment type="pathway">
    <text evidence="2 3 4">Sulfur metabolism; hydrogen sulfide biosynthesis; sulfite from sulfate: step 1/3.</text>
</comment>
<comment type="subunit">
    <text evidence="2">Heterodimer composed of CysD, the smaller subunit, and CysN.</text>
</comment>
<comment type="interaction">
    <interactant intactId="EBI-559728">
        <id>P23845</id>
    </interactant>
    <interactant intactId="EBI-1130200">
        <id>P21156</id>
        <label>cysD</label>
    </interactant>
    <organismsDiffer>false</organismsDiffer>
    <experiments>2</experiments>
</comment>
<comment type="similarity">
    <text evidence="2 5">Belongs to the TRAFAC class translation factor GTPase superfamily. Classic translation factor GTPase family. CysN/NodQ subfamily.</text>
</comment>
<name>CYSN_ECOLI</name>
<evidence type="ECO:0000250" key="1"/>
<evidence type="ECO:0000255" key="2">
    <source>
        <dbReference type="HAMAP-Rule" id="MF_00062"/>
    </source>
</evidence>
<evidence type="ECO:0000269" key="3">
    <source>
    </source>
</evidence>
<evidence type="ECO:0000269" key="4">
    <source>
    </source>
</evidence>
<evidence type="ECO:0000305" key="5"/>
<feature type="chain" id="PRO_0000091522" description="Sulfate adenylyltransferase subunit 1">
    <location>
        <begin position="1"/>
        <end position="475"/>
    </location>
</feature>
<feature type="domain" description="tr-type G">
    <location>
        <begin position="25"/>
        <end position="239"/>
    </location>
</feature>
<feature type="region of interest" description="G1" evidence="1">
    <location>
        <begin position="34"/>
        <end position="41"/>
    </location>
</feature>
<feature type="region of interest" description="G2" evidence="1">
    <location>
        <begin position="92"/>
        <end position="96"/>
    </location>
</feature>
<feature type="region of interest" description="G3" evidence="1">
    <location>
        <begin position="113"/>
        <end position="116"/>
    </location>
</feature>
<feature type="region of interest" description="G4" evidence="1">
    <location>
        <begin position="168"/>
        <end position="171"/>
    </location>
</feature>
<feature type="region of interest" description="G5" evidence="1">
    <location>
        <begin position="206"/>
        <end position="208"/>
    </location>
</feature>
<feature type="binding site" evidence="2">
    <location>
        <begin position="34"/>
        <end position="41"/>
    </location>
    <ligand>
        <name>GTP</name>
        <dbReference type="ChEBI" id="CHEBI:37565"/>
    </ligand>
</feature>
<feature type="binding site" evidence="2">
    <location>
        <begin position="113"/>
        <end position="117"/>
    </location>
    <ligand>
        <name>GTP</name>
        <dbReference type="ChEBI" id="CHEBI:37565"/>
    </ligand>
</feature>
<feature type="binding site" evidence="2">
    <location>
        <begin position="168"/>
        <end position="171"/>
    </location>
    <ligand>
        <name>GTP</name>
        <dbReference type="ChEBI" id="CHEBI:37565"/>
    </ligand>
</feature>
<gene>
    <name type="primary">cysN</name>
    <name type="ordered locus">b2751</name>
    <name type="ordered locus">JW2721</name>
</gene>
<sequence>MNTALAQQIANEGGVEAWMIAQQHKSLLRFLTCGSVDDGKSTLIGRLLHDTRQIYEDQLSSLHNDSKRHGTQGEKLDLALLVDGLQAEREQGITIDVAYRYFSTEKRKFIIADTPGHEQYTRNMATGASTCELAILLIDARKGVLDQTRRHSFISTLLGIKHLVVAINKMDLVDYSEETFTRIREDYLTFAGQLPGNLDIRFVPLSALEGDNVASQSESMPWYSGPTLLEVLETVEIQRVVDAQPMRFPVQYVNRPNLDFRGYAGTLASGRVEVGQRVKVLPSGVESNVARIVTFDGDREEAFAGEAITLVLTDEIDISRGDLLLAADEALPAVQSASVDVVWMAEQPLSPGQSYDIKIAGKKTRARVDGIRYQVDINNLTQREVENLPLNGIGLVDLTFDEPLVLDRYQQNPVTGGLIFIDRLSNVTVGAGMVHEPVSQATAAPSEFSAFELELNALVRRHFPHWGARDLLGDK</sequence>